<protein>
    <recommendedName>
        <fullName>Probable cytochrome c oxidase subunit 1</fullName>
        <ecNumber>7.1.1.9</ecNumber>
    </recommendedName>
    <alternativeName>
        <fullName>Cytochrome aa3 subunit 1</fullName>
    </alternativeName>
    <alternativeName>
        <fullName>Cytochrome c oxidase polypeptide I</fullName>
    </alternativeName>
</protein>
<sequence>MNSLTNIEDLNCDNQHIPNGFRRWIFSTNHKDIGIMYIIFAIFAGVVGGLFSLLFRLELAMPGGTFLNHNFQLYNVLITVHAIIMVFFMIMPALFSGFGNYFVPLLIGAPDMAFPRLNNISFWLLIPAFLLLISSTFIDGGPGTGWTLYPPLSNLNGHTGAAVDVAIFSLHLTGLSSILGSINLIVTIFNMRTPGMGLFKMPLFVWSILVTAFLIILAMPVLSGAITMLLTDRNFGTTFFKPDGGGDPLLFQHLFWFFGHPEVYIVILPGFGIVSQVISTFSRKPIFGYQGMVGAMVIIGFVGFIVWAHHMFTVGLSYNALIYFTAGTMIIAVPTGIKIFSWIATMWGGSITFPTPMLFAIGFIILFTIGGVTGIILSNSALDRVLHDTYYVVAHFHYTMSLGALFTAFAGFYYWFGKISGKQYPEILGKIHFWITFIGVNLTFFPQHFLGLAGMPRRIPDYPEAFAGWNMVSSIGAGISIFAAFYFVFIVFYTLKYGKNCTANPWGDGADTLEWKLNSPPPFHTFETPPHIVE</sequence>
<evidence type="ECO:0000250" key="1"/>
<evidence type="ECO:0000255" key="2"/>
<evidence type="ECO:0000305" key="3"/>
<accession>O54069</accession>
<proteinExistence type="inferred from homology"/>
<keyword id="KW-1003">Cell membrane</keyword>
<keyword id="KW-0186">Copper</keyword>
<keyword id="KW-0249">Electron transport</keyword>
<keyword id="KW-0349">Heme</keyword>
<keyword id="KW-0408">Iron</keyword>
<keyword id="KW-0472">Membrane</keyword>
<keyword id="KW-0479">Metal-binding</keyword>
<keyword id="KW-1185">Reference proteome</keyword>
<keyword id="KW-0679">Respiratory chain</keyword>
<keyword id="KW-1278">Translocase</keyword>
<keyword id="KW-0812">Transmembrane</keyword>
<keyword id="KW-1133">Transmembrane helix</keyword>
<keyword id="KW-0813">Transport</keyword>
<organism>
    <name type="scientific">Rickettsia prowazekii (strain Madrid E)</name>
    <dbReference type="NCBI Taxonomy" id="272947"/>
    <lineage>
        <taxon>Bacteria</taxon>
        <taxon>Pseudomonadati</taxon>
        <taxon>Pseudomonadota</taxon>
        <taxon>Alphaproteobacteria</taxon>
        <taxon>Rickettsiales</taxon>
        <taxon>Rickettsiaceae</taxon>
        <taxon>Rickettsieae</taxon>
        <taxon>Rickettsia</taxon>
        <taxon>typhus group</taxon>
    </lineage>
</organism>
<dbReference type="EC" id="7.1.1.9"/>
<dbReference type="EMBL" id="Y13855">
    <property type="protein sequence ID" value="CAA74167.1"/>
    <property type="molecule type" value="Genomic_DNA"/>
</dbReference>
<dbReference type="EMBL" id="AJ235271">
    <property type="protein sequence ID" value="CAA14862.1"/>
    <property type="molecule type" value="Genomic_DNA"/>
</dbReference>
<dbReference type="PIR" id="D71698">
    <property type="entry name" value="D71698"/>
</dbReference>
<dbReference type="RefSeq" id="NP_220786.1">
    <property type="nucleotide sequence ID" value="NC_000963.1"/>
</dbReference>
<dbReference type="RefSeq" id="WP_010886285.1">
    <property type="nucleotide sequence ID" value="NC_000963.1"/>
</dbReference>
<dbReference type="SMR" id="O54069"/>
<dbReference type="STRING" id="272947.gene:17555485"/>
<dbReference type="EnsemblBacteria" id="CAA14862">
    <property type="protein sequence ID" value="CAA14862"/>
    <property type="gene ID" value="CAA14862"/>
</dbReference>
<dbReference type="KEGG" id="rpr:RP405"/>
<dbReference type="PATRIC" id="fig|272947.5.peg.418"/>
<dbReference type="eggNOG" id="COG0843">
    <property type="taxonomic scope" value="Bacteria"/>
</dbReference>
<dbReference type="HOGENOM" id="CLU_011899_7_3_5"/>
<dbReference type="OrthoDB" id="9803294at2"/>
<dbReference type="UniPathway" id="UPA00705"/>
<dbReference type="Proteomes" id="UP000002480">
    <property type="component" value="Chromosome"/>
</dbReference>
<dbReference type="GO" id="GO:0005886">
    <property type="term" value="C:plasma membrane"/>
    <property type="evidence" value="ECO:0007669"/>
    <property type="project" value="UniProtKB-SubCell"/>
</dbReference>
<dbReference type="GO" id="GO:0045277">
    <property type="term" value="C:respiratory chain complex IV"/>
    <property type="evidence" value="ECO:0007669"/>
    <property type="project" value="InterPro"/>
</dbReference>
<dbReference type="GO" id="GO:0004129">
    <property type="term" value="F:cytochrome-c oxidase activity"/>
    <property type="evidence" value="ECO:0007669"/>
    <property type="project" value="UniProtKB-EC"/>
</dbReference>
<dbReference type="GO" id="GO:0020037">
    <property type="term" value="F:heme binding"/>
    <property type="evidence" value="ECO:0007669"/>
    <property type="project" value="InterPro"/>
</dbReference>
<dbReference type="GO" id="GO:0046872">
    <property type="term" value="F:metal ion binding"/>
    <property type="evidence" value="ECO:0007669"/>
    <property type="project" value="UniProtKB-KW"/>
</dbReference>
<dbReference type="GO" id="GO:0015990">
    <property type="term" value="P:electron transport coupled proton transport"/>
    <property type="evidence" value="ECO:0007669"/>
    <property type="project" value="InterPro"/>
</dbReference>
<dbReference type="GO" id="GO:0006119">
    <property type="term" value="P:oxidative phosphorylation"/>
    <property type="evidence" value="ECO:0007669"/>
    <property type="project" value="UniProtKB-UniPathway"/>
</dbReference>
<dbReference type="GO" id="GO:0022904">
    <property type="term" value="P:respiratory electron transport chain"/>
    <property type="evidence" value="ECO:0007669"/>
    <property type="project" value="TreeGrafter"/>
</dbReference>
<dbReference type="CDD" id="cd01663">
    <property type="entry name" value="Cyt_c_Oxidase_I"/>
    <property type="match status" value="1"/>
</dbReference>
<dbReference type="FunFam" id="1.20.210.10:FF:000004">
    <property type="entry name" value="Cytochrome c oxidase subunit 1"/>
    <property type="match status" value="1"/>
</dbReference>
<dbReference type="Gene3D" id="1.20.210.10">
    <property type="entry name" value="Cytochrome c oxidase-like, subunit I domain"/>
    <property type="match status" value="1"/>
</dbReference>
<dbReference type="InterPro" id="IPR023616">
    <property type="entry name" value="Cyt_c_oxase-like_su1_dom"/>
</dbReference>
<dbReference type="InterPro" id="IPR036927">
    <property type="entry name" value="Cyt_c_oxase-like_su1_sf"/>
</dbReference>
<dbReference type="InterPro" id="IPR000883">
    <property type="entry name" value="Cyt_C_Oxase_1"/>
</dbReference>
<dbReference type="InterPro" id="IPR023615">
    <property type="entry name" value="Cyt_c_Oxase_su1_BS"/>
</dbReference>
<dbReference type="InterPro" id="IPR033944">
    <property type="entry name" value="Cyt_c_oxase_su1_dom"/>
</dbReference>
<dbReference type="InterPro" id="IPR014241">
    <property type="entry name" value="Cyt_c_oxidase_su1_bac"/>
</dbReference>
<dbReference type="NCBIfam" id="TIGR02891">
    <property type="entry name" value="CtaD_CoxA"/>
    <property type="match status" value="1"/>
</dbReference>
<dbReference type="PANTHER" id="PTHR10422">
    <property type="entry name" value="CYTOCHROME C OXIDASE SUBUNIT 1"/>
    <property type="match status" value="1"/>
</dbReference>
<dbReference type="PANTHER" id="PTHR10422:SF18">
    <property type="entry name" value="CYTOCHROME C OXIDASE SUBUNIT 1"/>
    <property type="match status" value="1"/>
</dbReference>
<dbReference type="Pfam" id="PF00115">
    <property type="entry name" value="COX1"/>
    <property type="match status" value="1"/>
</dbReference>
<dbReference type="PRINTS" id="PR01165">
    <property type="entry name" value="CYCOXIDASEI"/>
</dbReference>
<dbReference type="SUPFAM" id="SSF81442">
    <property type="entry name" value="Cytochrome c oxidase subunit I-like"/>
    <property type="match status" value="1"/>
</dbReference>
<dbReference type="PROSITE" id="PS50855">
    <property type="entry name" value="COX1"/>
    <property type="match status" value="1"/>
</dbReference>
<dbReference type="PROSITE" id="PS00077">
    <property type="entry name" value="COX1_CUB"/>
    <property type="match status" value="1"/>
</dbReference>
<gene>
    <name type="primary">ctaD</name>
    <name type="synonym">coxA</name>
    <name type="ordered locus">RP405</name>
</gene>
<comment type="function">
    <text evidence="1">Cytochrome c oxidase is the component of the respiratory chain that catalyzes the reduction of oxygen to water. Subunits 1-3 form the functional core of the enzyme complex. CO I is the catalytic subunit of the enzyme. Electrons originating in cytochrome c are transferred via the copper A center of subunit 2 and heme A of subunit 1 to the bimetallic center formed by heme A3 and copper B (By similarity).</text>
</comment>
<comment type="catalytic activity">
    <reaction>
        <text>4 Fe(II)-[cytochrome c] + O2 + 8 H(+)(in) = 4 Fe(III)-[cytochrome c] + 2 H2O + 4 H(+)(out)</text>
        <dbReference type="Rhea" id="RHEA:11436"/>
        <dbReference type="Rhea" id="RHEA-COMP:10350"/>
        <dbReference type="Rhea" id="RHEA-COMP:14399"/>
        <dbReference type="ChEBI" id="CHEBI:15377"/>
        <dbReference type="ChEBI" id="CHEBI:15378"/>
        <dbReference type="ChEBI" id="CHEBI:15379"/>
        <dbReference type="ChEBI" id="CHEBI:29033"/>
        <dbReference type="ChEBI" id="CHEBI:29034"/>
        <dbReference type="EC" id="7.1.1.9"/>
    </reaction>
</comment>
<comment type="pathway">
    <text>Energy metabolism; oxidative phosphorylation.</text>
</comment>
<comment type="subcellular location">
    <subcellularLocation>
        <location>Cell membrane</location>
        <topology>Multi-pass membrane protein</topology>
    </subcellularLocation>
</comment>
<comment type="similarity">
    <text evidence="3">Belongs to the heme-copper respiratory oxidase family.</text>
</comment>
<reference key="1">
    <citation type="submission" date="1997-06" db="EMBL/GenBank/DDBJ databases">
        <title>The bacterial origin of mitochondria inferred from a phylogenetic analysis of the cytochrome b and cytochrome c oxidase I genes.</title>
        <authorList>
            <person name="Sicheritz T."/>
            <person name="Kurland C.G."/>
            <person name="Andersson S.G.E."/>
        </authorList>
    </citation>
    <scope>NUCLEOTIDE SEQUENCE [GENOMIC DNA]</scope>
    <source>
        <strain>Madrid E</strain>
    </source>
</reference>
<reference key="2">
    <citation type="journal article" date="1998" name="Nature">
        <title>The genome sequence of Rickettsia prowazekii and the origin of mitochondria.</title>
        <authorList>
            <person name="Andersson S.G.E."/>
            <person name="Zomorodipour A."/>
            <person name="Andersson J.O."/>
            <person name="Sicheritz-Ponten T."/>
            <person name="Alsmark U.C.M."/>
            <person name="Podowski R.M."/>
            <person name="Naeslund A.K."/>
            <person name="Eriksson A.-S."/>
            <person name="Winkler H.H."/>
            <person name="Kurland C.G."/>
        </authorList>
    </citation>
    <scope>NUCLEOTIDE SEQUENCE [LARGE SCALE GENOMIC DNA]</scope>
    <source>
        <strain>Madrid E</strain>
    </source>
</reference>
<name>COX1_RICPR</name>
<feature type="chain" id="PRO_0000183449" description="Probable cytochrome c oxidase subunit 1">
    <location>
        <begin position="1"/>
        <end position="534"/>
    </location>
</feature>
<feature type="transmembrane region" description="Helical" evidence="2">
    <location>
        <begin position="35"/>
        <end position="55"/>
    </location>
</feature>
<feature type="transmembrane region" description="Helical" evidence="2">
    <location>
        <begin position="76"/>
        <end position="96"/>
    </location>
</feature>
<feature type="transmembrane region" description="Helical" evidence="2">
    <location>
        <begin position="97"/>
        <end position="117"/>
    </location>
</feature>
<feature type="transmembrane region" description="Helical" evidence="2">
    <location>
        <begin position="120"/>
        <end position="140"/>
    </location>
</feature>
<feature type="transmembrane region" description="Helical" evidence="2">
    <location>
        <begin position="165"/>
        <end position="185"/>
    </location>
</feature>
<feature type="transmembrane region" description="Helical" evidence="2">
    <location>
        <begin position="202"/>
        <end position="222"/>
    </location>
</feature>
<feature type="transmembrane region" description="Helical" evidence="2">
    <location>
        <begin position="254"/>
        <end position="274"/>
    </location>
</feature>
<feature type="transmembrane region" description="Helical" evidence="2">
    <location>
        <begin position="286"/>
        <end position="306"/>
    </location>
</feature>
<feature type="transmembrane region" description="Helical" evidence="2">
    <location>
        <begin position="320"/>
        <end position="340"/>
    </location>
</feature>
<feature type="transmembrane region" description="Helical" evidence="2">
    <location>
        <begin position="357"/>
        <end position="377"/>
    </location>
</feature>
<feature type="transmembrane region" description="Helical" evidence="2">
    <location>
        <begin position="396"/>
        <end position="416"/>
    </location>
</feature>
<feature type="transmembrane region" description="Helical" evidence="2">
    <location>
        <begin position="433"/>
        <end position="453"/>
    </location>
</feature>
<feature type="transmembrane region" description="Helical" evidence="2">
    <location>
        <begin position="475"/>
        <end position="495"/>
    </location>
</feature>
<feature type="binding site" description="axial binding residue" evidence="3">
    <location>
        <position position="81"/>
    </location>
    <ligand>
        <name>Fe(II)-heme a</name>
        <dbReference type="ChEBI" id="CHEBI:61715"/>
    </ligand>
    <ligandPart>
        <name>Fe</name>
        <dbReference type="ChEBI" id="CHEBI:18248"/>
    </ligandPart>
</feature>
<feature type="binding site" evidence="3">
    <location>
        <position position="260"/>
    </location>
    <ligand>
        <name>Cu cation</name>
        <dbReference type="ChEBI" id="CHEBI:23378"/>
        <label>B</label>
    </ligand>
</feature>
<feature type="binding site" evidence="3">
    <location>
        <position position="264"/>
    </location>
    <ligand>
        <name>Cu cation</name>
        <dbReference type="ChEBI" id="CHEBI:23378"/>
        <label>B</label>
    </ligand>
</feature>
<feature type="binding site" evidence="3">
    <location>
        <position position="309"/>
    </location>
    <ligand>
        <name>Cu cation</name>
        <dbReference type="ChEBI" id="CHEBI:23378"/>
        <label>B</label>
    </ligand>
</feature>
<feature type="binding site" evidence="3">
    <location>
        <position position="310"/>
    </location>
    <ligand>
        <name>Cu cation</name>
        <dbReference type="ChEBI" id="CHEBI:23378"/>
        <label>B</label>
    </ligand>
</feature>
<feature type="binding site" description="axial binding residue" evidence="3">
    <location>
        <position position="395"/>
    </location>
    <ligand>
        <name>heme a3</name>
        <dbReference type="ChEBI" id="CHEBI:83282"/>
    </ligand>
    <ligandPart>
        <name>Fe</name>
        <dbReference type="ChEBI" id="CHEBI:18248"/>
    </ligandPart>
</feature>
<feature type="binding site" description="axial binding residue" evidence="3">
    <location>
        <position position="397"/>
    </location>
    <ligand>
        <name>Fe(II)-heme a</name>
        <dbReference type="ChEBI" id="CHEBI:61715"/>
    </ligand>
    <ligandPart>
        <name>Fe</name>
        <dbReference type="ChEBI" id="CHEBI:18248"/>
    </ligandPart>
</feature>
<feature type="cross-link" description="1'-histidyl-3'-tyrosine (His-Tyr)" evidence="1">
    <location>
        <begin position="260"/>
        <end position="264"/>
    </location>
</feature>